<evidence type="ECO:0000255" key="1">
    <source>
        <dbReference type="HAMAP-Rule" id="MF_01224"/>
    </source>
</evidence>
<reference key="1">
    <citation type="submission" date="2008-10" db="EMBL/GenBank/DDBJ databases">
        <title>Genome sequence of Bacillus cereus G9842.</title>
        <authorList>
            <person name="Dodson R.J."/>
            <person name="Durkin A.S."/>
            <person name="Rosovitz M.J."/>
            <person name="Rasko D.A."/>
            <person name="Hoffmaster A."/>
            <person name="Ravel J."/>
            <person name="Sutton G."/>
        </authorList>
    </citation>
    <scope>NUCLEOTIDE SEQUENCE [LARGE SCALE GENOMIC DNA]</scope>
    <source>
        <strain>G9842</strain>
    </source>
</reference>
<accession>B7IKZ0</accession>
<comment type="function">
    <text evidence="1">Catalyzes the conversion of (8S)-3',8-cyclo-7,8-dihydroguanosine 5'-triphosphate to cyclic pyranopterin monophosphate (cPMP).</text>
</comment>
<comment type="catalytic activity">
    <reaction evidence="1">
        <text>(8S)-3',8-cyclo-7,8-dihydroguanosine 5'-triphosphate = cyclic pyranopterin phosphate + diphosphate</text>
        <dbReference type="Rhea" id="RHEA:49580"/>
        <dbReference type="ChEBI" id="CHEBI:33019"/>
        <dbReference type="ChEBI" id="CHEBI:59648"/>
        <dbReference type="ChEBI" id="CHEBI:131766"/>
        <dbReference type="EC" id="4.6.1.17"/>
    </reaction>
</comment>
<comment type="pathway">
    <text evidence="1">Cofactor biosynthesis; molybdopterin biosynthesis.</text>
</comment>
<comment type="subunit">
    <text evidence="1">Homohexamer; trimer of dimers.</text>
</comment>
<comment type="similarity">
    <text evidence="1">Belongs to the MoaC family.</text>
</comment>
<organism>
    <name type="scientific">Bacillus cereus (strain G9842)</name>
    <dbReference type="NCBI Taxonomy" id="405531"/>
    <lineage>
        <taxon>Bacteria</taxon>
        <taxon>Bacillati</taxon>
        <taxon>Bacillota</taxon>
        <taxon>Bacilli</taxon>
        <taxon>Bacillales</taxon>
        <taxon>Bacillaceae</taxon>
        <taxon>Bacillus</taxon>
        <taxon>Bacillus cereus group</taxon>
    </lineage>
</organism>
<name>MOAC_BACC2</name>
<sequence length="161" mass="17499">MSSFTHFNDQGRAKMVDISDKKATVRTAIACSSIVVTKEIYDKISHNEIGKGDVLAVAQIAGIMAAKRTSDIIPMCHPLLLKGVDVSFDWKQSEEQYRLLIEVKVKTEGSTGVEMEALTAASATALTVYDMCKAVDKGMIIGETYLLEKTGGKSGDYTRNS</sequence>
<proteinExistence type="inferred from homology"/>
<protein>
    <recommendedName>
        <fullName evidence="1">Cyclic pyranopterin monophosphate synthase</fullName>
        <ecNumber evidence="1">4.6.1.17</ecNumber>
    </recommendedName>
    <alternativeName>
        <fullName evidence="1">Molybdenum cofactor biosynthesis protein C</fullName>
    </alternativeName>
</protein>
<dbReference type="EC" id="4.6.1.17" evidence="1"/>
<dbReference type="EMBL" id="CP001186">
    <property type="protein sequence ID" value="ACK97379.1"/>
    <property type="molecule type" value="Genomic_DNA"/>
</dbReference>
<dbReference type="RefSeq" id="WP_000094146.1">
    <property type="nucleotide sequence ID" value="NC_011772.1"/>
</dbReference>
<dbReference type="SMR" id="B7IKZ0"/>
<dbReference type="GeneID" id="67469015"/>
<dbReference type="KEGG" id="bcg:BCG9842_B0401"/>
<dbReference type="HOGENOM" id="CLU_074693_1_1_9"/>
<dbReference type="UniPathway" id="UPA00344"/>
<dbReference type="Proteomes" id="UP000006744">
    <property type="component" value="Chromosome"/>
</dbReference>
<dbReference type="GO" id="GO:0061799">
    <property type="term" value="F:cyclic pyranopterin monophosphate synthase activity"/>
    <property type="evidence" value="ECO:0007669"/>
    <property type="project" value="UniProtKB-UniRule"/>
</dbReference>
<dbReference type="GO" id="GO:0006777">
    <property type="term" value="P:Mo-molybdopterin cofactor biosynthetic process"/>
    <property type="evidence" value="ECO:0007669"/>
    <property type="project" value="UniProtKB-UniRule"/>
</dbReference>
<dbReference type="CDD" id="cd01420">
    <property type="entry name" value="MoaC_PE"/>
    <property type="match status" value="1"/>
</dbReference>
<dbReference type="Gene3D" id="3.30.70.640">
    <property type="entry name" value="Molybdopterin cofactor biosynthesis C (MoaC) domain"/>
    <property type="match status" value="1"/>
</dbReference>
<dbReference type="HAMAP" id="MF_01224_B">
    <property type="entry name" value="MoaC_B"/>
    <property type="match status" value="1"/>
</dbReference>
<dbReference type="InterPro" id="IPR023045">
    <property type="entry name" value="MoaC"/>
</dbReference>
<dbReference type="InterPro" id="IPR047594">
    <property type="entry name" value="MoaC_bact/euk"/>
</dbReference>
<dbReference type="InterPro" id="IPR036522">
    <property type="entry name" value="MoaC_sf"/>
</dbReference>
<dbReference type="InterPro" id="IPR050105">
    <property type="entry name" value="MoCo_biosynth_MoaA/MoaC"/>
</dbReference>
<dbReference type="InterPro" id="IPR002820">
    <property type="entry name" value="Mopterin_CF_biosynth-C_dom"/>
</dbReference>
<dbReference type="NCBIfam" id="TIGR00581">
    <property type="entry name" value="moaC"/>
    <property type="match status" value="1"/>
</dbReference>
<dbReference type="NCBIfam" id="NF006870">
    <property type="entry name" value="PRK09364.1"/>
    <property type="match status" value="1"/>
</dbReference>
<dbReference type="PANTHER" id="PTHR22960:SF29">
    <property type="entry name" value="CYCLIC PYRANOPTERIN MONOPHOSPHATE SYNTHASE"/>
    <property type="match status" value="1"/>
</dbReference>
<dbReference type="PANTHER" id="PTHR22960">
    <property type="entry name" value="MOLYBDOPTERIN COFACTOR SYNTHESIS PROTEIN A"/>
    <property type="match status" value="1"/>
</dbReference>
<dbReference type="Pfam" id="PF01967">
    <property type="entry name" value="MoaC"/>
    <property type="match status" value="1"/>
</dbReference>
<dbReference type="SUPFAM" id="SSF55040">
    <property type="entry name" value="Molybdenum cofactor biosynthesis protein C, MoaC"/>
    <property type="match status" value="1"/>
</dbReference>
<feature type="chain" id="PRO_1000139243" description="Cyclic pyranopterin monophosphate synthase">
    <location>
        <begin position="1"/>
        <end position="161"/>
    </location>
</feature>
<feature type="active site" evidence="1">
    <location>
        <position position="130"/>
    </location>
</feature>
<feature type="binding site" evidence="1">
    <location>
        <begin position="75"/>
        <end position="77"/>
    </location>
    <ligand>
        <name>substrate</name>
    </ligand>
</feature>
<feature type="binding site" evidence="1">
    <location>
        <begin position="115"/>
        <end position="116"/>
    </location>
    <ligand>
        <name>substrate</name>
    </ligand>
</feature>
<gene>
    <name evidence="1" type="primary">moaC</name>
    <name type="ordered locus">BCG9842_B0401</name>
</gene>
<keyword id="KW-0456">Lyase</keyword>
<keyword id="KW-0501">Molybdenum cofactor biosynthesis</keyword>